<name>IF2G_SACS2</name>
<dbReference type="EC" id="3.6.5.3" evidence="2 4"/>
<dbReference type="EMBL" id="AE006641">
    <property type="protein sequence ID" value="AAK40740.1"/>
    <property type="molecule type" value="Genomic_DNA"/>
</dbReference>
<dbReference type="PIR" id="E90185">
    <property type="entry name" value="E90185"/>
</dbReference>
<dbReference type="RefSeq" id="WP_009988771.1">
    <property type="nucleotide sequence ID" value="NC_002754.1"/>
</dbReference>
<dbReference type="PDB" id="2AHO">
    <property type="method" value="X-ray"/>
    <property type="resolution" value="3.00 A"/>
    <property type="chains" value="A=2-415"/>
</dbReference>
<dbReference type="PDB" id="2PLF">
    <property type="method" value="X-ray"/>
    <property type="resolution" value="2.90 A"/>
    <property type="chains" value="A=2-415"/>
</dbReference>
<dbReference type="PDB" id="2PMD">
    <property type="method" value="X-ray"/>
    <property type="resolution" value="2.65 A"/>
    <property type="chains" value="A/B=1-415"/>
</dbReference>
<dbReference type="PDB" id="2QMU">
    <property type="method" value="X-ray"/>
    <property type="resolution" value="3.20 A"/>
    <property type="chains" value="A=2-415"/>
</dbReference>
<dbReference type="PDB" id="2QN6">
    <property type="method" value="X-ray"/>
    <property type="resolution" value="2.15 A"/>
    <property type="chains" value="A=2-415"/>
</dbReference>
<dbReference type="PDB" id="3CW2">
    <property type="method" value="X-ray"/>
    <property type="resolution" value="2.80 A"/>
    <property type="chains" value="A/B/E/F=1-415"/>
</dbReference>
<dbReference type="PDB" id="3I1F">
    <property type="method" value="X-ray"/>
    <property type="resolution" value="2.50 A"/>
    <property type="chains" value="A/B=1-415"/>
</dbReference>
<dbReference type="PDB" id="3PEN">
    <property type="method" value="X-ray"/>
    <property type="resolution" value="2.30 A"/>
    <property type="chains" value="A=2-415"/>
</dbReference>
<dbReference type="PDB" id="3QSY">
    <property type="method" value="X-ray"/>
    <property type="resolution" value="3.20 A"/>
    <property type="chains" value="A=1-415"/>
</dbReference>
<dbReference type="PDB" id="3SJZ">
    <property type="method" value="X-ray"/>
    <property type="resolution" value="2.80 A"/>
    <property type="chains" value="A=2-415"/>
</dbReference>
<dbReference type="PDB" id="3V11">
    <property type="method" value="X-ray"/>
    <property type="resolution" value="5.00 A"/>
    <property type="chains" value="A=2-415"/>
</dbReference>
<dbReference type="PDB" id="4M0L">
    <property type="method" value="X-ray"/>
    <property type="resolution" value="2.60 A"/>
    <property type="chains" value="A/B/C/D/E/F=1-415"/>
</dbReference>
<dbReference type="PDB" id="4M2L">
    <property type="method" value="X-ray"/>
    <property type="resolution" value="2.15 A"/>
    <property type="chains" value="A=1-415"/>
</dbReference>
<dbReference type="PDB" id="4M4S">
    <property type="method" value="X-ray"/>
    <property type="resolution" value="2.25 A"/>
    <property type="chains" value="A=1-415"/>
</dbReference>
<dbReference type="PDB" id="4M53">
    <property type="method" value="X-ray"/>
    <property type="resolution" value="2.00 A"/>
    <property type="chains" value="A=1-415"/>
</dbReference>
<dbReference type="PDB" id="4NBS">
    <property type="method" value="X-ray"/>
    <property type="resolution" value="2.30 A"/>
    <property type="chains" value="A=1-415"/>
</dbReference>
<dbReference type="PDB" id="4QFM">
    <property type="method" value="X-ray"/>
    <property type="resolution" value="2.30 A"/>
    <property type="chains" value="A=1-415"/>
</dbReference>
<dbReference type="PDB" id="4QHY">
    <property type="method" value="X-ray"/>
    <property type="resolution" value="3.29 A"/>
    <property type="chains" value="A=1-415"/>
</dbReference>
<dbReference type="PDB" id="4RCY">
    <property type="method" value="X-ray"/>
    <property type="resolution" value="1.65 A"/>
    <property type="chains" value="A=1-415"/>
</dbReference>
<dbReference type="PDB" id="4RCZ">
    <property type="method" value="X-ray"/>
    <property type="resolution" value="1.43 A"/>
    <property type="chains" value="A=1-415"/>
</dbReference>
<dbReference type="PDB" id="4RD0">
    <property type="method" value="X-ray"/>
    <property type="resolution" value="1.71 A"/>
    <property type="chains" value="A=1-415"/>
</dbReference>
<dbReference type="PDB" id="4RD1">
    <property type="method" value="X-ray"/>
    <property type="resolution" value="1.50 A"/>
    <property type="chains" value="A=1-415"/>
</dbReference>
<dbReference type="PDB" id="4RD2">
    <property type="method" value="X-ray"/>
    <property type="resolution" value="1.58 A"/>
    <property type="chains" value="A=1-415"/>
</dbReference>
<dbReference type="PDB" id="4RD3">
    <property type="method" value="X-ray"/>
    <property type="resolution" value="1.69 A"/>
    <property type="chains" value="A=1-415"/>
</dbReference>
<dbReference type="PDB" id="4RD4">
    <property type="method" value="X-ray"/>
    <property type="resolution" value="1.30 A"/>
    <property type="chains" value="A=1-415"/>
</dbReference>
<dbReference type="PDB" id="4RD6">
    <property type="method" value="X-ray"/>
    <property type="resolution" value="1.94 A"/>
    <property type="chains" value="A=1-415"/>
</dbReference>
<dbReference type="PDB" id="4RJL">
    <property type="method" value="X-ray"/>
    <property type="resolution" value="1.64 A"/>
    <property type="chains" value="A=1-415"/>
</dbReference>
<dbReference type="PDB" id="5DSZ">
    <property type="method" value="X-ray"/>
    <property type="resolution" value="2.50 A"/>
    <property type="chains" value="A/B=1-415"/>
</dbReference>
<dbReference type="PDB" id="5JB3">
    <property type="method" value="EM"/>
    <property type="resolution" value="5.34 A"/>
    <property type="chains" value="7=1-415"/>
</dbReference>
<dbReference type="PDB" id="5JBH">
    <property type="method" value="EM"/>
    <property type="resolution" value="5.34 A"/>
    <property type="chains" value="7=1-415"/>
</dbReference>
<dbReference type="PDB" id="6H6K">
    <property type="method" value="X-ray"/>
    <property type="resolution" value="2.00 A"/>
    <property type="chains" value="A/B/C/D/E=1-415"/>
</dbReference>
<dbReference type="PDB" id="6I5M">
    <property type="method" value="X-ray"/>
    <property type="resolution" value="2.40 A"/>
    <property type="chains" value="A=1-415"/>
</dbReference>
<dbReference type="PDB" id="6R8S">
    <property type="method" value="X-ray"/>
    <property type="resolution" value="2.18 A"/>
    <property type="chains" value="A=1-415"/>
</dbReference>
<dbReference type="PDB" id="6R8T">
    <property type="method" value="X-ray"/>
    <property type="resolution" value="2.10 A"/>
    <property type="chains" value="A=1-415"/>
</dbReference>
<dbReference type="PDB" id="6SW9">
    <property type="method" value="EM"/>
    <property type="resolution" value="4.20 A"/>
    <property type="chains" value="7=2-415"/>
</dbReference>
<dbReference type="PDB" id="6SWC">
    <property type="method" value="EM"/>
    <property type="resolution" value="3.30 A"/>
    <property type="chains" value="7=1-415"/>
</dbReference>
<dbReference type="PDBsum" id="2AHO"/>
<dbReference type="PDBsum" id="2PLF"/>
<dbReference type="PDBsum" id="2PMD"/>
<dbReference type="PDBsum" id="2QMU"/>
<dbReference type="PDBsum" id="2QN6"/>
<dbReference type="PDBsum" id="3CW2"/>
<dbReference type="PDBsum" id="3I1F"/>
<dbReference type="PDBsum" id="3PEN"/>
<dbReference type="PDBsum" id="3QSY"/>
<dbReference type="PDBsum" id="3SJZ"/>
<dbReference type="PDBsum" id="3V11"/>
<dbReference type="PDBsum" id="4M0L"/>
<dbReference type="PDBsum" id="4M2L"/>
<dbReference type="PDBsum" id="4M4S"/>
<dbReference type="PDBsum" id="4M53"/>
<dbReference type="PDBsum" id="4NBS"/>
<dbReference type="PDBsum" id="4QFM"/>
<dbReference type="PDBsum" id="4QHY"/>
<dbReference type="PDBsum" id="4RCY"/>
<dbReference type="PDBsum" id="4RCZ"/>
<dbReference type="PDBsum" id="4RD0"/>
<dbReference type="PDBsum" id="4RD1"/>
<dbReference type="PDBsum" id="4RD2"/>
<dbReference type="PDBsum" id="4RD3"/>
<dbReference type="PDBsum" id="4RD4"/>
<dbReference type="PDBsum" id="4RD6"/>
<dbReference type="PDBsum" id="4RJL"/>
<dbReference type="PDBsum" id="5DSZ"/>
<dbReference type="PDBsum" id="5JB3"/>
<dbReference type="PDBsum" id="5JBH"/>
<dbReference type="PDBsum" id="6H6K"/>
<dbReference type="PDBsum" id="6I5M"/>
<dbReference type="PDBsum" id="6R8S"/>
<dbReference type="PDBsum" id="6R8T"/>
<dbReference type="PDBsum" id="6SW9"/>
<dbReference type="PDBsum" id="6SWC"/>
<dbReference type="EMDB" id="EMD-10320"/>
<dbReference type="EMDB" id="EMD-10322"/>
<dbReference type="EMDB" id="EMD-8148"/>
<dbReference type="EMDB" id="EMD-8149"/>
<dbReference type="SASBDB" id="Q980A5"/>
<dbReference type="SMR" id="Q980A5"/>
<dbReference type="DIP" id="DIP-29031N"/>
<dbReference type="FunCoup" id="Q980A5">
    <property type="interactions" value="238"/>
</dbReference>
<dbReference type="IntAct" id="Q980A5">
    <property type="interactions" value="1"/>
</dbReference>
<dbReference type="STRING" id="273057.SSO0412"/>
<dbReference type="PaxDb" id="273057-SSO0412"/>
<dbReference type="EnsemblBacteria" id="AAK40740">
    <property type="protein sequence ID" value="AAK40740"/>
    <property type="gene ID" value="SSO0412"/>
</dbReference>
<dbReference type="KEGG" id="sso:SSO0412"/>
<dbReference type="PATRIC" id="fig|273057.12.peg.407"/>
<dbReference type="eggNOG" id="arCOG01563">
    <property type="taxonomic scope" value="Archaea"/>
</dbReference>
<dbReference type="HOGENOM" id="CLU_027154_0_1_2"/>
<dbReference type="InParanoid" id="Q980A5"/>
<dbReference type="PhylomeDB" id="Q980A5"/>
<dbReference type="BRENDA" id="3.6.5.3">
    <property type="organism ID" value="6163"/>
</dbReference>
<dbReference type="EvolutionaryTrace" id="Q980A5"/>
<dbReference type="Proteomes" id="UP000001974">
    <property type="component" value="Chromosome"/>
</dbReference>
<dbReference type="GO" id="GO:0005525">
    <property type="term" value="F:GTP binding"/>
    <property type="evidence" value="ECO:0007669"/>
    <property type="project" value="UniProtKB-UniRule"/>
</dbReference>
<dbReference type="GO" id="GO:0003924">
    <property type="term" value="F:GTPase activity"/>
    <property type="evidence" value="ECO:0007669"/>
    <property type="project" value="InterPro"/>
</dbReference>
<dbReference type="GO" id="GO:0046872">
    <property type="term" value="F:metal ion binding"/>
    <property type="evidence" value="ECO:0007669"/>
    <property type="project" value="UniProtKB-KW"/>
</dbReference>
<dbReference type="GO" id="GO:0003746">
    <property type="term" value="F:translation elongation factor activity"/>
    <property type="evidence" value="ECO:0007669"/>
    <property type="project" value="UniProtKB-UniRule"/>
</dbReference>
<dbReference type="GO" id="GO:0003743">
    <property type="term" value="F:translation initiation factor activity"/>
    <property type="evidence" value="ECO:0000318"/>
    <property type="project" value="GO_Central"/>
</dbReference>
<dbReference type="GO" id="GO:0000049">
    <property type="term" value="F:tRNA binding"/>
    <property type="evidence" value="ECO:0007669"/>
    <property type="project" value="InterPro"/>
</dbReference>
<dbReference type="GO" id="GO:0001731">
    <property type="term" value="P:formation of translation preinitiation complex"/>
    <property type="evidence" value="ECO:0000318"/>
    <property type="project" value="GO_Central"/>
</dbReference>
<dbReference type="CDD" id="cd01888">
    <property type="entry name" value="eIF2_gamma"/>
    <property type="match status" value="1"/>
</dbReference>
<dbReference type="CDD" id="cd03688">
    <property type="entry name" value="eIF2_gamma_II"/>
    <property type="match status" value="1"/>
</dbReference>
<dbReference type="CDD" id="cd15490">
    <property type="entry name" value="eIF2_gamma_III"/>
    <property type="match status" value="1"/>
</dbReference>
<dbReference type="FunFam" id="2.40.30.10:FF:000009">
    <property type="entry name" value="Eukaryotic translation initiation factor 2 subunit gamma"/>
    <property type="match status" value="1"/>
</dbReference>
<dbReference type="FunFam" id="3.40.50.300:FF:000065">
    <property type="entry name" value="Eukaryotic translation initiation factor 2 subunit gamma"/>
    <property type="match status" value="1"/>
</dbReference>
<dbReference type="FunFam" id="2.40.30.10:FF:000075">
    <property type="entry name" value="Translation initiation factor 2 subunit gamma"/>
    <property type="match status" value="1"/>
</dbReference>
<dbReference type="Gene3D" id="3.40.50.300">
    <property type="entry name" value="P-loop containing nucleotide triphosphate hydrolases"/>
    <property type="match status" value="1"/>
</dbReference>
<dbReference type="Gene3D" id="2.40.30.10">
    <property type="entry name" value="Translation factors"/>
    <property type="match status" value="2"/>
</dbReference>
<dbReference type="HAMAP" id="MF_00119">
    <property type="entry name" value="eIF_2_gamma"/>
    <property type="match status" value="1"/>
</dbReference>
<dbReference type="InterPro" id="IPR050543">
    <property type="entry name" value="eIF2G"/>
</dbReference>
<dbReference type="InterPro" id="IPR015256">
    <property type="entry name" value="eIF2g_C"/>
</dbReference>
<dbReference type="InterPro" id="IPR044127">
    <property type="entry name" value="eIF2g_dom_2"/>
</dbReference>
<dbReference type="InterPro" id="IPR044128">
    <property type="entry name" value="eIF2g_GTP-bd"/>
</dbReference>
<dbReference type="InterPro" id="IPR027417">
    <property type="entry name" value="P-loop_NTPase"/>
</dbReference>
<dbReference type="InterPro" id="IPR005225">
    <property type="entry name" value="Small_GTP-bd"/>
</dbReference>
<dbReference type="InterPro" id="IPR000795">
    <property type="entry name" value="T_Tr_GTP-bd_dom"/>
</dbReference>
<dbReference type="InterPro" id="IPR022424">
    <property type="entry name" value="TIF2_gsu"/>
</dbReference>
<dbReference type="InterPro" id="IPR009000">
    <property type="entry name" value="Transl_B-barrel_sf"/>
</dbReference>
<dbReference type="InterPro" id="IPR009001">
    <property type="entry name" value="Transl_elong_EF1A/Init_IF2_C"/>
</dbReference>
<dbReference type="NCBIfam" id="TIGR03680">
    <property type="entry name" value="eif2g_arch"/>
    <property type="match status" value="1"/>
</dbReference>
<dbReference type="NCBIfam" id="NF003077">
    <property type="entry name" value="PRK04000.1"/>
    <property type="match status" value="1"/>
</dbReference>
<dbReference type="NCBIfam" id="TIGR00231">
    <property type="entry name" value="small_GTP"/>
    <property type="match status" value="1"/>
</dbReference>
<dbReference type="PANTHER" id="PTHR42854">
    <property type="entry name" value="EUKARYOTIC TRANSLATION INITIATION FACTOR 2 SUBUNIT 3 FAMILY MEMBER"/>
    <property type="match status" value="1"/>
</dbReference>
<dbReference type="PANTHER" id="PTHR42854:SF3">
    <property type="entry name" value="EUKARYOTIC TRANSLATION INITIATION FACTOR 2 SUBUNIT 3-RELATED"/>
    <property type="match status" value="1"/>
</dbReference>
<dbReference type="Pfam" id="PF09173">
    <property type="entry name" value="eIF2_C"/>
    <property type="match status" value="1"/>
</dbReference>
<dbReference type="Pfam" id="PF00009">
    <property type="entry name" value="GTP_EFTU"/>
    <property type="match status" value="1"/>
</dbReference>
<dbReference type="PRINTS" id="PR00315">
    <property type="entry name" value="ELONGATNFCT"/>
</dbReference>
<dbReference type="SUPFAM" id="SSF50465">
    <property type="entry name" value="EF-Tu/eEF-1alpha/eIF2-gamma C-terminal domain"/>
    <property type="match status" value="1"/>
</dbReference>
<dbReference type="SUPFAM" id="SSF52540">
    <property type="entry name" value="P-loop containing nucleoside triphosphate hydrolases"/>
    <property type="match status" value="1"/>
</dbReference>
<dbReference type="SUPFAM" id="SSF50447">
    <property type="entry name" value="Translation proteins"/>
    <property type="match status" value="1"/>
</dbReference>
<dbReference type="PROSITE" id="PS51722">
    <property type="entry name" value="G_TR_2"/>
    <property type="match status" value="1"/>
</dbReference>
<organism>
    <name type="scientific">Saccharolobus solfataricus (strain ATCC 35092 / DSM 1617 / JCM 11322 / P2)</name>
    <name type="common">Sulfolobus solfataricus</name>
    <dbReference type="NCBI Taxonomy" id="273057"/>
    <lineage>
        <taxon>Archaea</taxon>
        <taxon>Thermoproteota</taxon>
        <taxon>Thermoprotei</taxon>
        <taxon>Sulfolobales</taxon>
        <taxon>Sulfolobaceae</taxon>
        <taxon>Saccharolobus</taxon>
    </lineage>
</organism>
<reference key="1">
    <citation type="journal article" date="2001" name="Proc. Natl. Acad. Sci. U.S.A.">
        <title>The complete genome of the crenarchaeon Sulfolobus solfataricus P2.</title>
        <authorList>
            <person name="She Q."/>
            <person name="Singh R.K."/>
            <person name="Confalonieri F."/>
            <person name="Zivanovic Y."/>
            <person name="Allard G."/>
            <person name="Awayez M.J."/>
            <person name="Chan-Weiher C.C.-Y."/>
            <person name="Clausen I.G."/>
            <person name="Curtis B.A."/>
            <person name="De Moors A."/>
            <person name="Erauso G."/>
            <person name="Fletcher C."/>
            <person name="Gordon P.M.K."/>
            <person name="Heikamp-de Jong I."/>
            <person name="Jeffries A.C."/>
            <person name="Kozera C.J."/>
            <person name="Medina N."/>
            <person name="Peng X."/>
            <person name="Thi-Ngoc H.P."/>
            <person name="Redder P."/>
            <person name="Schenk M.E."/>
            <person name="Theriault C."/>
            <person name="Tolstrup N."/>
            <person name="Charlebois R.L."/>
            <person name="Doolittle W.F."/>
            <person name="Duguet M."/>
            <person name="Gaasterland T."/>
            <person name="Garrett R.A."/>
            <person name="Ragan M.A."/>
            <person name="Sensen C.W."/>
            <person name="Van der Oost J."/>
        </authorList>
    </citation>
    <scope>NUCLEOTIDE SEQUENCE [LARGE SCALE GENOMIC DNA]</scope>
    <source>
        <strain>ATCC 35092 / DSM 1617 / JCM 11322 / P2</strain>
    </source>
</reference>
<reference evidence="5" key="2">
    <citation type="journal article" date="2006" name="Structure">
        <title>Structural switch of the gamma subunit in an archaeal aIF2 alpha gamma heterodimer.</title>
        <authorList>
            <person name="Yatime L."/>
            <person name="Mechulam Y."/>
            <person name="Blanquet S."/>
            <person name="Schmitt E."/>
        </authorList>
    </citation>
    <scope>X-RAY CRYSTALLOGRAPHY (3.00 ANGSTROMS) OF 2-415</scope>
</reference>
<reference evidence="6 7" key="3">
    <citation type="journal article" date="2007" name="J. Mol. Biol.">
        <title>New insights into the interactions of the translation initiation factor 2 from archaea with guanine nucleotides and initiator tRNA.</title>
        <authorList>
            <person name="Nikonov O."/>
            <person name="Stolboushkina E."/>
            <person name="Nikulin A."/>
            <person name="Hasenohrl D."/>
            <person name="Blasi U."/>
            <person name="Manstein D.J."/>
            <person name="Fedorov R."/>
            <person name="Garber M."/>
            <person name="Nikonov S."/>
        </authorList>
    </citation>
    <scope>X-RAY CRYSTALLOGRAPHY (2.65 ANGSTROMS)</scope>
</reference>
<reference evidence="8 9" key="4">
    <citation type="journal article" date="2007" name="Proc. Natl. Acad. Sci. U.S.A.">
        <title>Structure of an archaeal heterotrimeric initiation factor 2 reveals a nucleotide state between the GTP and the GDP states.</title>
        <authorList>
            <person name="Yatime L."/>
            <person name="Mechulam Y."/>
            <person name="Blanquet S."/>
            <person name="Schmitt E."/>
        </authorList>
    </citation>
    <scope>X-RAY CRYSTALLOGRAPHY (2.15 ANGSTROMS) OF 2-415</scope>
</reference>
<reference evidence="10" key="5">
    <citation type="journal article" date="2008" name="J. Mol. Biol.">
        <title>Crystal structure of the intact archaeal translation initiation factor 2 demonstrates very high conformational flexibility in the alpha- and beta-subunits.</title>
        <authorList>
            <person name="Stolboushkina E."/>
            <person name="Nikonov S."/>
            <person name="Nikulin A."/>
            <person name="Blasi U."/>
            <person name="Manstein D.J."/>
            <person name="Fedorov R."/>
            <person name="Garber M."/>
            <person name="Nikonov O."/>
        </authorList>
    </citation>
    <scope>X-RAY CRYSTALLOGRAPHY (2.80 ANGSTROMS)</scope>
</reference>
<reference evidence="12" key="6">
    <citation type="journal article" date="2012" name="Nat. Struct. Mol. Biol.">
        <title>Structure of the ternary initiation complex aIF2-GDPNP-methionylated initiator tRNA.</title>
        <authorList>
            <person name="Schmitt E."/>
            <person name="Panvert M."/>
            <person name="Lazennec-Schurdevin C."/>
            <person name="Coureux P.D."/>
            <person name="Perez J."/>
            <person name="Thompson A."/>
            <person name="Mechulam Y."/>
        </authorList>
    </citation>
    <scope>X-RAY CRYSTALLOGRAPHY (5.00 ANGSTROMS) OF 2-415</scope>
</reference>
<reference evidence="11" key="7">
    <citation type="journal article" date="2013" name="J. Mol. Biol.">
        <title>Crystal structure of the archaeal translation initiation factor 2 in complex with a GTP analogue and Met-tRNAf(Met.).</title>
        <authorList>
            <person name="Stolboushkina E."/>
            <person name="Nikonov S."/>
            <person name="Zelinskaya N."/>
            <person name="Arkhipova V."/>
            <person name="Nikulin A."/>
            <person name="Garber M."/>
            <person name="Nikonov O."/>
        </authorList>
    </citation>
    <scope>X-RAY CRYSTALLOGRAPHY (3.20 ANGSTROMS)</scope>
</reference>
<reference evidence="13 14 15 16" key="8">
    <citation type="journal article" date="2014" name="Acta Crystallogr. D">
        <title>Conformational transitions in the gamma subunit of the archaeal translation initiation factor 2.</title>
        <authorList>
            <person name="Nikonov O."/>
            <person name="Stolboushkina E."/>
            <person name="Arkhipova V."/>
            <person name="Kravchenko O."/>
            <person name="Nikonov S."/>
            <person name="Garber M."/>
        </authorList>
    </citation>
    <scope>X-RAY CRYSTALLOGRAPHY (2.00 ANGSTROMS) IN COMPLEX WITH MAGNESIUM</scope>
</reference>
<reference evidence="17 18 19 20 21 22 23 24" key="9">
    <citation type="journal article" date="2015" name="Nucleic Acids Res.">
        <title>Identification of a second GTP-bound magnesium ion in archaeal initiation factor 2.</title>
        <authorList>
            <person name="Dubiez E."/>
            <person name="Aleksandrov A."/>
            <person name="Lazennec-Schurdevin C."/>
            <person name="Mechulam Y."/>
            <person name="Schmitt E."/>
        </authorList>
    </citation>
    <scope>X-RAY CRYSTALLOGRAPHY (1.30 ANGSTROMS) IN COMPLEX WITH GTP</scope>
    <scope>MUTAGENESIS OF ASP-19 AND HIS-97</scope>
</reference>
<reference evidence="25 26" key="10">
    <citation type="journal article" date="2016" name="Nat. Commun.">
        <title>Cryo-EM study of start codon selection during archaeal translation initiation.</title>
        <authorList>
            <person name="Coureux P.D."/>
            <person name="Lazennec-Schurdevin C."/>
            <person name="Monestier A."/>
            <person name="Larquet E."/>
            <person name="Cladiere L."/>
            <person name="Klaholz B.P."/>
            <person name="Schmitt E."/>
            <person name="Mechulam Y."/>
        </authorList>
    </citation>
    <scope>STRUCTURE BY ELECTRON MICROSCOPY (5.34 ANGSTROMS)</scope>
</reference>
<reference evidence="27 28" key="11">
    <citation type="journal article" date="2019" name="Acta Crystallogr. D">
        <title>The third structural switch in the archaeal translation initiation factor 2 (aIF2) molecule and its possible role in the initiation of GTP hydrolysis and the removal of aIF2 from the ribosome.</title>
        <authorList>
            <person name="Nikonov O."/>
            <person name="Kravchenko O."/>
            <person name="Nevskaya N."/>
            <person name="Stolboushkina E."/>
            <person name="Garber M."/>
            <person name="Nikonov S."/>
        </authorList>
    </citation>
    <scope>X-RAY CRYSTALLOGRAPHY (2.00 ANGSTROMS)</scope>
</reference>
<protein>
    <recommendedName>
        <fullName evidence="2">Translation initiation factor 2 subunit gamma</fullName>
        <ecNumber evidence="2 4">3.6.5.3</ecNumber>
    </recommendedName>
    <alternativeName>
        <fullName evidence="2">aIF2-gamma</fullName>
    </alternativeName>
    <alternativeName>
        <fullName evidence="2">eIF-2-gamma</fullName>
    </alternativeName>
</protein>
<sequence>MAWPKVQPEVNIGVVGHVDHGKTTLVQAITGIWTSKHSEELKRGMTIKLGYAETNIGVCESCKKPEAYVTEPSCKSCGSDDEPKFLRRISFIDAPGHEVLMATMLSGAALMDGAILVVAANEPFPQPQTREHFVALGIIGVKNLIIVQNKVDVVSKEEALSQYRQIKQFTKGTWAENVPIIPVSALHKINIDSLIEGIEEYIKTPYRDLSQKPVMLVIRSFDVNKPGTQFNELKGGVIGGSIIQGLFKVDQEIKVLPGLRVEKQGKVSYEPIFTKISSIRFGDEEFKEAKPGGLVAIGTYLDPSLTKADNLLGSIITLADAEVPVLWNIRIKYNLLERVVGAKEMLKVDPIRAKETLMLSVGSSTTLGIVTSVKKDEIEVELRRPVAVWSNNIRTVISRQIAGRWRMIGWGLVEI</sequence>
<proteinExistence type="evidence at protein level"/>
<comment type="function">
    <text evidence="2">eIF-2 functions in the early steps of protein synthesis by forming a ternary complex with GTP and initiator tRNA.</text>
</comment>
<comment type="catalytic activity">
    <reaction evidence="2 4">
        <text>GTP + H2O = GDP + phosphate + H(+)</text>
        <dbReference type="Rhea" id="RHEA:19669"/>
        <dbReference type="ChEBI" id="CHEBI:15377"/>
        <dbReference type="ChEBI" id="CHEBI:15378"/>
        <dbReference type="ChEBI" id="CHEBI:37565"/>
        <dbReference type="ChEBI" id="CHEBI:43474"/>
        <dbReference type="ChEBI" id="CHEBI:58189"/>
        <dbReference type="EC" id="3.6.5.3"/>
    </reaction>
</comment>
<comment type="cofactor">
    <cofactor evidence="2 4">
        <name>Mg(2+)</name>
        <dbReference type="ChEBI" id="CHEBI:18420"/>
    </cofactor>
</comment>
<comment type="subunit">
    <text evidence="2">Heterotrimer composed of an alpha, a beta and a gamma chain.</text>
</comment>
<comment type="interaction">
    <interactant intactId="EBI-9010337">
        <id>Q980A5</id>
    </interactant>
    <interactant intactId="EBI-9010365">
        <id>Q97Z79</id>
        <label>eif2a</label>
    </interactant>
    <organismsDiffer>false</organismsDiffer>
    <experiments>2</experiments>
</comment>
<comment type="similarity">
    <text evidence="2">Belongs to the TRAFAC class translation factor GTPase superfamily. Classic translation factor GTPase family. EIF2G subfamily.</text>
</comment>
<evidence type="ECO:0000250" key="1">
    <source>
        <dbReference type="UniProtKB" id="Q8U082"/>
    </source>
</evidence>
<evidence type="ECO:0000255" key="2">
    <source>
        <dbReference type="HAMAP-Rule" id="MF_00119"/>
    </source>
</evidence>
<evidence type="ECO:0000269" key="3">
    <source>
    </source>
</evidence>
<evidence type="ECO:0000269" key="4">
    <source>
    </source>
</evidence>
<evidence type="ECO:0007744" key="5">
    <source>
        <dbReference type="PDB" id="2AHO"/>
    </source>
</evidence>
<evidence type="ECO:0007744" key="6">
    <source>
        <dbReference type="PDB" id="2PLF"/>
    </source>
</evidence>
<evidence type="ECO:0007744" key="7">
    <source>
        <dbReference type="PDB" id="2PMD"/>
    </source>
</evidence>
<evidence type="ECO:0007744" key="8">
    <source>
        <dbReference type="PDB" id="2QMU"/>
    </source>
</evidence>
<evidence type="ECO:0007744" key="9">
    <source>
        <dbReference type="PDB" id="2QN6"/>
    </source>
</evidence>
<evidence type="ECO:0007744" key="10">
    <source>
        <dbReference type="PDB" id="3CW2"/>
    </source>
</evidence>
<evidence type="ECO:0007744" key="11">
    <source>
        <dbReference type="PDB" id="3QSY"/>
    </source>
</evidence>
<evidence type="ECO:0007744" key="12">
    <source>
        <dbReference type="PDB" id="3V11"/>
    </source>
</evidence>
<evidence type="ECO:0007744" key="13">
    <source>
        <dbReference type="PDB" id="4M0L"/>
    </source>
</evidence>
<evidence type="ECO:0007744" key="14">
    <source>
        <dbReference type="PDB" id="4M2L"/>
    </source>
</evidence>
<evidence type="ECO:0007744" key="15">
    <source>
        <dbReference type="PDB" id="4M4S"/>
    </source>
</evidence>
<evidence type="ECO:0007744" key="16">
    <source>
        <dbReference type="PDB" id="4M53"/>
    </source>
</evidence>
<evidence type="ECO:0007744" key="17">
    <source>
        <dbReference type="PDB" id="4RCY"/>
    </source>
</evidence>
<evidence type="ECO:0007744" key="18">
    <source>
        <dbReference type="PDB" id="4RCZ"/>
    </source>
</evidence>
<evidence type="ECO:0007744" key="19">
    <source>
        <dbReference type="PDB" id="4RD0"/>
    </source>
</evidence>
<evidence type="ECO:0007744" key="20">
    <source>
        <dbReference type="PDB" id="4RD1"/>
    </source>
</evidence>
<evidence type="ECO:0007744" key="21">
    <source>
        <dbReference type="PDB" id="4RD2"/>
    </source>
</evidence>
<evidence type="ECO:0007744" key="22">
    <source>
        <dbReference type="PDB" id="4RD3"/>
    </source>
</evidence>
<evidence type="ECO:0007744" key="23">
    <source>
        <dbReference type="PDB" id="4RD4"/>
    </source>
</evidence>
<evidence type="ECO:0007744" key="24">
    <source>
        <dbReference type="PDB" id="4RD6"/>
    </source>
</evidence>
<evidence type="ECO:0007744" key="25">
    <source>
        <dbReference type="PDB" id="5JB3"/>
    </source>
</evidence>
<evidence type="ECO:0007744" key="26">
    <source>
        <dbReference type="PDB" id="5JBH"/>
    </source>
</evidence>
<evidence type="ECO:0007744" key="27">
    <source>
        <dbReference type="PDB" id="6H6K"/>
    </source>
</evidence>
<evidence type="ECO:0007744" key="28">
    <source>
        <dbReference type="PDB" id="6I5M"/>
    </source>
</evidence>
<evidence type="ECO:0007829" key="29">
    <source>
        <dbReference type="PDB" id="2QMU"/>
    </source>
</evidence>
<evidence type="ECO:0007829" key="30">
    <source>
        <dbReference type="PDB" id="3CW2"/>
    </source>
</evidence>
<evidence type="ECO:0007829" key="31">
    <source>
        <dbReference type="PDB" id="3I1F"/>
    </source>
</evidence>
<evidence type="ECO:0007829" key="32">
    <source>
        <dbReference type="PDB" id="4M4S"/>
    </source>
</evidence>
<evidence type="ECO:0007829" key="33">
    <source>
        <dbReference type="PDB" id="4RD4"/>
    </source>
</evidence>
<evidence type="ECO:0007829" key="34">
    <source>
        <dbReference type="PDB" id="4RD6"/>
    </source>
</evidence>
<evidence type="ECO:0007829" key="35">
    <source>
        <dbReference type="PDB" id="4RJL"/>
    </source>
</evidence>
<evidence type="ECO:0007829" key="36">
    <source>
        <dbReference type="PDB" id="5DSZ"/>
    </source>
</evidence>
<evidence type="ECO:0007829" key="37">
    <source>
        <dbReference type="PDB" id="6H6K"/>
    </source>
</evidence>
<keyword id="KW-0002">3D-structure</keyword>
<keyword id="KW-0342">GTP-binding</keyword>
<keyword id="KW-0378">Hydrolase</keyword>
<keyword id="KW-0396">Initiation factor</keyword>
<keyword id="KW-0460">Magnesium</keyword>
<keyword id="KW-0479">Metal-binding</keyword>
<keyword id="KW-0547">Nucleotide-binding</keyword>
<keyword id="KW-0648">Protein biosynthesis</keyword>
<keyword id="KW-1185">Reference proteome</keyword>
<keyword id="KW-0862">Zinc</keyword>
<feature type="chain" id="PRO_0000137463" description="Translation initiation factor 2 subunit gamma">
    <location>
        <begin position="1"/>
        <end position="415"/>
    </location>
</feature>
<feature type="domain" description="tr-type G" evidence="2">
    <location>
        <begin position="7"/>
        <end position="206"/>
    </location>
</feature>
<feature type="region of interest" description="G1" evidence="2">
    <location>
        <begin position="16"/>
        <end position="23"/>
    </location>
</feature>
<feature type="region of interest" description="G2" evidence="2">
    <location>
        <begin position="44"/>
        <end position="48"/>
    </location>
</feature>
<feature type="region of interest" description="G3" evidence="2">
    <location>
        <begin position="93"/>
        <end position="96"/>
    </location>
</feature>
<feature type="region of interest" description="G4" evidence="2">
    <location>
        <begin position="149"/>
        <end position="152"/>
    </location>
</feature>
<feature type="region of interest" description="G5" evidence="2">
    <location>
        <begin position="184"/>
        <end position="186"/>
    </location>
</feature>
<feature type="binding site" evidence="2 4 17 20">
    <location>
        <begin position="19"/>
        <end position="24"/>
    </location>
    <ligand>
        <name>GTP</name>
        <dbReference type="ChEBI" id="CHEBI:37565"/>
    </ligand>
</feature>
<feature type="binding site" evidence="2 4 20">
    <location>
        <position position="19"/>
    </location>
    <ligand>
        <name>Mg(2+)</name>
        <dbReference type="ChEBI" id="CHEBI:18420"/>
        <label>2</label>
    </ligand>
</feature>
<feature type="binding site" evidence="2 3 4 5">
    <location>
        <position position="23"/>
    </location>
    <ligand>
        <name>Mg(2+)</name>
        <dbReference type="ChEBI" id="CHEBI:18420"/>
        <label>1</label>
    </ligand>
</feature>
<feature type="binding site" evidence="2 4 20">
    <location>
        <position position="44"/>
    </location>
    <ligand>
        <name>Mg(2+)</name>
        <dbReference type="ChEBI" id="CHEBI:18420"/>
        <label>2</label>
    </ligand>
</feature>
<feature type="binding site" evidence="2 3 4 5">
    <location>
        <position position="46"/>
    </location>
    <ligand>
        <name>Mg(2+)</name>
        <dbReference type="ChEBI" id="CHEBI:18420"/>
        <label>1</label>
    </ligand>
</feature>
<feature type="binding site" evidence="1 2">
    <location>
        <position position="59"/>
    </location>
    <ligand>
        <name>Zn(2+)</name>
        <dbReference type="ChEBI" id="CHEBI:29105"/>
    </ligand>
</feature>
<feature type="binding site" evidence="1 2">
    <location>
        <position position="62"/>
    </location>
    <ligand>
        <name>Zn(2+)</name>
        <dbReference type="ChEBI" id="CHEBI:29105"/>
    </ligand>
</feature>
<feature type="binding site" evidence="1 2">
    <location>
        <position position="74"/>
    </location>
    <ligand>
        <name>Zn(2+)</name>
        <dbReference type="ChEBI" id="CHEBI:29105"/>
    </ligand>
</feature>
<feature type="binding site" evidence="1 2">
    <location>
        <position position="77"/>
    </location>
    <ligand>
        <name>Zn(2+)</name>
        <dbReference type="ChEBI" id="CHEBI:29105"/>
    </ligand>
</feature>
<feature type="binding site" evidence="2 4 17 20">
    <location>
        <begin position="149"/>
        <end position="152"/>
    </location>
    <ligand>
        <name>GTP</name>
        <dbReference type="ChEBI" id="CHEBI:37565"/>
    </ligand>
</feature>
<feature type="binding site" evidence="2 4 17 20">
    <location>
        <begin position="184"/>
        <end position="186"/>
    </location>
    <ligand>
        <name>GTP</name>
        <dbReference type="ChEBI" id="CHEBI:37565"/>
    </ligand>
</feature>
<feature type="mutagenesis site" description="Reduces GTP hydrolysis 8.5-fold. Completely aboloshes GTPase activity; when associated with A-97." evidence="4">
    <original>D</original>
    <variation>A</variation>
    <location>
        <position position="19"/>
    </location>
</feature>
<feature type="mutagenesis site" description="Reduces GTP hydrolysis 17.5-fold. Completely aboloshes GTPase activity; when associated with A-19." evidence="4">
    <original>H</original>
    <variation>A</variation>
    <location>
        <position position="97"/>
    </location>
</feature>
<feature type="strand" evidence="33">
    <location>
        <begin position="10"/>
        <end position="15"/>
    </location>
</feature>
<feature type="strand" evidence="29">
    <location>
        <begin position="18"/>
        <end position="21"/>
    </location>
</feature>
<feature type="helix" evidence="33">
    <location>
        <begin position="22"/>
        <end position="30"/>
    </location>
</feature>
<feature type="turn" evidence="31">
    <location>
        <begin position="34"/>
        <end position="37"/>
    </location>
</feature>
<feature type="helix" evidence="33">
    <location>
        <begin position="38"/>
        <end position="43"/>
    </location>
</feature>
<feature type="strand" evidence="33">
    <location>
        <begin position="50"/>
        <end position="58"/>
    </location>
</feature>
<feature type="strand" evidence="32">
    <location>
        <begin position="60"/>
        <end position="62"/>
    </location>
</feature>
<feature type="turn" evidence="33">
    <location>
        <begin position="64"/>
        <end position="67"/>
    </location>
</feature>
<feature type="strand" evidence="33">
    <location>
        <begin position="68"/>
        <end position="72"/>
    </location>
</feature>
<feature type="helix" evidence="33">
    <location>
        <begin position="75"/>
        <end position="77"/>
    </location>
</feature>
<feature type="strand" evidence="33">
    <location>
        <begin position="84"/>
        <end position="93"/>
    </location>
</feature>
<feature type="helix" evidence="33">
    <location>
        <begin position="98"/>
        <end position="100"/>
    </location>
</feature>
<feature type="helix" evidence="33">
    <location>
        <begin position="101"/>
        <end position="108"/>
    </location>
</feature>
<feature type="strand" evidence="33">
    <location>
        <begin position="112"/>
        <end position="119"/>
    </location>
</feature>
<feature type="strand" evidence="30">
    <location>
        <begin position="120"/>
        <end position="124"/>
    </location>
</feature>
<feature type="helix" evidence="33">
    <location>
        <begin position="127"/>
        <end position="139"/>
    </location>
</feature>
<feature type="strand" evidence="33">
    <location>
        <begin position="144"/>
        <end position="149"/>
    </location>
</feature>
<feature type="helix" evidence="33">
    <location>
        <begin position="151"/>
        <end position="153"/>
    </location>
</feature>
<feature type="helix" evidence="33">
    <location>
        <begin position="156"/>
        <end position="170"/>
    </location>
</feature>
<feature type="strand" evidence="36">
    <location>
        <begin position="171"/>
        <end position="173"/>
    </location>
</feature>
<feature type="turn" evidence="33">
    <location>
        <begin position="174"/>
        <end position="177"/>
    </location>
</feature>
<feature type="strand" evidence="33">
    <location>
        <begin position="180"/>
        <end position="182"/>
    </location>
</feature>
<feature type="turn" evidence="33">
    <location>
        <begin position="185"/>
        <end position="188"/>
    </location>
</feature>
<feature type="helix" evidence="33">
    <location>
        <begin position="191"/>
        <end position="201"/>
    </location>
</feature>
<feature type="strand" evidence="33">
    <location>
        <begin position="209"/>
        <end position="211"/>
    </location>
</feature>
<feature type="strand" evidence="33">
    <location>
        <begin position="214"/>
        <end position="221"/>
    </location>
</feature>
<feature type="helix" evidence="33">
    <location>
        <begin position="230"/>
        <end position="232"/>
    </location>
</feature>
<feature type="strand" evidence="37">
    <location>
        <begin position="233"/>
        <end position="235"/>
    </location>
</feature>
<feature type="strand" evidence="33">
    <location>
        <begin position="237"/>
        <end position="245"/>
    </location>
</feature>
<feature type="strand" evidence="33">
    <location>
        <begin position="252"/>
        <end position="263"/>
    </location>
</feature>
<feature type="strand" evidence="33">
    <location>
        <begin position="266"/>
        <end position="275"/>
    </location>
</feature>
<feature type="strand" evidence="33">
    <location>
        <begin position="278"/>
        <end position="281"/>
    </location>
</feature>
<feature type="strand" evidence="33">
    <location>
        <begin position="284"/>
        <end position="289"/>
    </location>
</feature>
<feature type="strand" evidence="33">
    <location>
        <begin position="291"/>
        <end position="293"/>
    </location>
</feature>
<feature type="strand" evidence="33">
    <location>
        <begin position="295"/>
        <end position="298"/>
    </location>
</feature>
<feature type="helix" evidence="33">
    <location>
        <begin position="303"/>
        <end position="305"/>
    </location>
</feature>
<feature type="helix" evidence="33">
    <location>
        <begin position="307"/>
        <end position="309"/>
    </location>
</feature>
<feature type="turn" evidence="33">
    <location>
        <begin position="310"/>
        <end position="313"/>
    </location>
</feature>
<feature type="strand" evidence="33">
    <location>
        <begin position="315"/>
        <end position="318"/>
    </location>
</feature>
<feature type="strand" evidence="33">
    <location>
        <begin position="325"/>
        <end position="335"/>
    </location>
</feature>
<feature type="strand" evidence="34">
    <location>
        <begin position="337"/>
        <end position="339"/>
    </location>
</feature>
<feature type="strand" evidence="33">
    <location>
        <begin position="342"/>
        <end position="344"/>
    </location>
</feature>
<feature type="strand" evidence="33">
    <location>
        <begin position="356"/>
        <end position="361"/>
    </location>
</feature>
<feature type="strand" evidence="33">
    <location>
        <begin position="364"/>
        <end position="373"/>
    </location>
</feature>
<feature type="strand" evidence="33">
    <location>
        <begin position="375"/>
        <end position="387"/>
    </location>
</feature>
<feature type="strand" evidence="35">
    <location>
        <begin position="390"/>
        <end position="392"/>
    </location>
</feature>
<feature type="strand" evidence="33">
    <location>
        <begin position="393"/>
        <end position="401"/>
    </location>
</feature>
<feature type="strand" evidence="33">
    <location>
        <begin position="404"/>
        <end position="414"/>
    </location>
</feature>
<gene>
    <name evidence="2" type="primary">eif2g</name>
    <name type="ordered locus">SSO0412</name>
</gene>
<accession>Q980A5</accession>